<gene>
    <name evidence="1" type="primary">ycaR</name>
    <name type="ordered locus">STM0987</name>
</gene>
<protein>
    <recommendedName>
        <fullName evidence="1">UPF0434 protein YcaR</fullName>
    </recommendedName>
</protein>
<proteinExistence type="inferred from homology"/>
<accession>Q7CQT7</accession>
<organism>
    <name type="scientific">Salmonella typhimurium (strain LT2 / SGSC1412 / ATCC 700720)</name>
    <dbReference type="NCBI Taxonomy" id="99287"/>
    <lineage>
        <taxon>Bacteria</taxon>
        <taxon>Pseudomonadati</taxon>
        <taxon>Pseudomonadota</taxon>
        <taxon>Gammaproteobacteria</taxon>
        <taxon>Enterobacterales</taxon>
        <taxon>Enterobacteriaceae</taxon>
        <taxon>Salmonella</taxon>
    </lineage>
</organism>
<keyword id="KW-1185">Reference proteome</keyword>
<reference key="1">
    <citation type="journal article" date="2001" name="Nature">
        <title>Complete genome sequence of Salmonella enterica serovar Typhimurium LT2.</title>
        <authorList>
            <person name="McClelland M."/>
            <person name="Sanderson K.E."/>
            <person name="Spieth J."/>
            <person name="Clifton S.W."/>
            <person name="Latreille P."/>
            <person name="Courtney L."/>
            <person name="Porwollik S."/>
            <person name="Ali J."/>
            <person name="Dante M."/>
            <person name="Du F."/>
            <person name="Hou S."/>
            <person name="Layman D."/>
            <person name="Leonard S."/>
            <person name="Nguyen C."/>
            <person name="Scott K."/>
            <person name="Holmes A."/>
            <person name="Grewal N."/>
            <person name="Mulvaney E."/>
            <person name="Ryan E."/>
            <person name="Sun H."/>
            <person name="Florea L."/>
            <person name="Miller W."/>
            <person name="Stoneking T."/>
            <person name="Nhan M."/>
            <person name="Waterston R."/>
            <person name="Wilson R.K."/>
        </authorList>
    </citation>
    <scope>NUCLEOTIDE SEQUENCE [LARGE SCALE GENOMIC DNA]</scope>
    <source>
        <strain>LT2 / SGSC1412 / ATCC 700720</strain>
    </source>
</reference>
<dbReference type="EMBL" id="AE006468">
    <property type="protein sequence ID" value="AAL19921.1"/>
    <property type="molecule type" value="Genomic_DNA"/>
</dbReference>
<dbReference type="RefSeq" id="NP_459962.1">
    <property type="nucleotide sequence ID" value="NC_003197.2"/>
</dbReference>
<dbReference type="RefSeq" id="WP_000350061.1">
    <property type="nucleotide sequence ID" value="NC_003197.2"/>
</dbReference>
<dbReference type="SMR" id="Q7CQT7"/>
<dbReference type="STRING" id="99287.STM0987"/>
<dbReference type="PaxDb" id="99287-STM0987"/>
<dbReference type="DNASU" id="1252505"/>
<dbReference type="GeneID" id="1252505"/>
<dbReference type="KEGG" id="stm:STM0987"/>
<dbReference type="PATRIC" id="fig|99287.12.peg.1040"/>
<dbReference type="HOGENOM" id="CLU_155659_3_1_6"/>
<dbReference type="OMA" id="ELICHAD"/>
<dbReference type="PhylomeDB" id="Q7CQT7"/>
<dbReference type="BioCyc" id="SENT99287:STM0987-MONOMER"/>
<dbReference type="Proteomes" id="UP000001014">
    <property type="component" value="Chromosome"/>
</dbReference>
<dbReference type="GO" id="GO:0005829">
    <property type="term" value="C:cytosol"/>
    <property type="evidence" value="ECO:0000318"/>
    <property type="project" value="GO_Central"/>
</dbReference>
<dbReference type="FunFam" id="2.20.25.10:FF:000002">
    <property type="entry name" value="UPF0434 protein YcaR"/>
    <property type="match status" value="1"/>
</dbReference>
<dbReference type="Gene3D" id="2.20.25.10">
    <property type="match status" value="1"/>
</dbReference>
<dbReference type="HAMAP" id="MF_01187">
    <property type="entry name" value="UPF0434"/>
    <property type="match status" value="1"/>
</dbReference>
<dbReference type="InterPro" id="IPR005651">
    <property type="entry name" value="Trm112-like"/>
</dbReference>
<dbReference type="NCBIfam" id="NF008806">
    <property type="entry name" value="PRK11827.1"/>
    <property type="match status" value="1"/>
</dbReference>
<dbReference type="PANTHER" id="PTHR33505:SF4">
    <property type="entry name" value="PROTEIN PREY, MITOCHONDRIAL"/>
    <property type="match status" value="1"/>
</dbReference>
<dbReference type="PANTHER" id="PTHR33505">
    <property type="entry name" value="ZGC:162634"/>
    <property type="match status" value="1"/>
</dbReference>
<dbReference type="Pfam" id="PF03966">
    <property type="entry name" value="Trm112p"/>
    <property type="match status" value="1"/>
</dbReference>
<dbReference type="SUPFAM" id="SSF158997">
    <property type="entry name" value="Trm112p-like"/>
    <property type="match status" value="1"/>
</dbReference>
<name>YCAR_SALTY</name>
<evidence type="ECO:0000255" key="1">
    <source>
        <dbReference type="HAMAP-Rule" id="MF_01187"/>
    </source>
</evidence>
<sequence length="60" mass="6856">MDHRLLEIIACPVCNGKLWYNQEQQELICKLDNLAFPLRDGIPVLLENEARALTSDESKS</sequence>
<feature type="chain" id="PRO_0000291161" description="UPF0434 protein YcaR">
    <location>
        <begin position="1"/>
        <end position="60"/>
    </location>
</feature>
<comment type="similarity">
    <text evidence="1">Belongs to the UPF0434 family.</text>
</comment>